<dbReference type="EMBL" id="Z00044">
    <property type="protein sequence ID" value="CAA77339.1"/>
    <property type="molecule type" value="Genomic_DNA"/>
</dbReference>
<dbReference type="PIR" id="A05183">
    <property type="entry name" value="A05183"/>
</dbReference>
<dbReference type="RefSeq" id="NP_054478.1">
    <property type="nucleotide sequence ID" value="NC_001879.2"/>
</dbReference>
<dbReference type="GeneID" id="800495"/>
<dbReference type="KEGG" id="nta:800495"/>
<dbReference type="OMA" id="RVWYLDI"/>
<dbReference type="OrthoDB" id="1886907at2759"/>
<dbReference type="Proteomes" id="UP000084051">
    <property type="component" value="Unplaced"/>
</dbReference>
<dbReference type="GO" id="GO:0009507">
    <property type="term" value="C:chloroplast"/>
    <property type="evidence" value="ECO:0007669"/>
    <property type="project" value="UniProtKB-SubCell"/>
</dbReference>
<dbReference type="GO" id="GO:0003723">
    <property type="term" value="F:RNA binding"/>
    <property type="evidence" value="ECO:0007669"/>
    <property type="project" value="UniProtKB-KW"/>
</dbReference>
<dbReference type="GO" id="GO:0006397">
    <property type="term" value="P:mRNA processing"/>
    <property type="evidence" value="ECO:0007669"/>
    <property type="project" value="UniProtKB-KW"/>
</dbReference>
<dbReference type="GO" id="GO:0008380">
    <property type="term" value="P:RNA splicing"/>
    <property type="evidence" value="ECO:0007669"/>
    <property type="project" value="UniProtKB-UniRule"/>
</dbReference>
<dbReference type="GO" id="GO:0008033">
    <property type="term" value="P:tRNA processing"/>
    <property type="evidence" value="ECO:0007669"/>
    <property type="project" value="UniProtKB-KW"/>
</dbReference>
<dbReference type="HAMAP" id="MF_01390">
    <property type="entry name" value="MatK"/>
    <property type="match status" value="1"/>
</dbReference>
<dbReference type="InterPro" id="IPR024937">
    <property type="entry name" value="Domain_X"/>
</dbReference>
<dbReference type="InterPro" id="IPR002866">
    <property type="entry name" value="Maturase_MatK"/>
</dbReference>
<dbReference type="InterPro" id="IPR024942">
    <property type="entry name" value="Maturase_MatK_N"/>
</dbReference>
<dbReference type="PANTHER" id="PTHR34811">
    <property type="entry name" value="MATURASE K"/>
    <property type="match status" value="1"/>
</dbReference>
<dbReference type="PANTHER" id="PTHR34811:SF1">
    <property type="entry name" value="MATURASE K"/>
    <property type="match status" value="1"/>
</dbReference>
<dbReference type="Pfam" id="PF01348">
    <property type="entry name" value="Intron_maturas2"/>
    <property type="match status" value="1"/>
</dbReference>
<dbReference type="Pfam" id="PF01824">
    <property type="entry name" value="MatK_N"/>
    <property type="match status" value="1"/>
</dbReference>
<keyword id="KW-0150">Chloroplast</keyword>
<keyword id="KW-0507">mRNA processing</keyword>
<keyword id="KW-0934">Plastid</keyword>
<keyword id="KW-1185">Reference proteome</keyword>
<keyword id="KW-0694">RNA-binding</keyword>
<keyword id="KW-0819">tRNA processing</keyword>
<sequence length="509" mass="60178">MEEIQRYLQPDRSQQHNFLYPLIFQEYIYALAHDHGLNRNRSILLENPGYNNKLSFLIVKRLITRMYQQNHFLISTNDSNKNSFLGCNKSLYSQMISEGFAFIVEIPFSLRLISSLSSFEGKKIFKSYNLRSIHSTFPFLEDNFSHLNYVLDILIPYPVHLEILVQTLRYWVKDASSLHLLRFFLHEFWNLNSLITSKKPGYSFSKKNQRFFFFLYNSYVYECESTFVFLRNQSSHLRSTSFGALLERIYFYGKIERLVEVFAKDFQVTLWLFKDPFMHYVRYQGKSILASKGTFLLMNKWKFYLVNFWQCHCSLCFHTGRIHINQLSNHSRDFMGYLSSVRLNPSMVRSQMLENSFLINNAIKKFDTLVPIIPLIGSLAKANFCTVLGHPISKPVWSDLSDSDIIDRFGRICRNLFHYYSGSSKKKTLYRIKYILRLSCARTLARKHKSTVRTFLKRSGSELLEEFLTSEEQVLSLTFPRASSSLWGVYRSRIWYLDIFCINDLANYQ</sequence>
<name>MATK_TOBAC</name>
<reference key="1">
    <citation type="journal article" date="1986" name="EMBO J.">
        <title>The complete nucleotide sequence of the tobacco chloroplast genome: its gene organization and expression.</title>
        <authorList>
            <person name="Shinozaki K."/>
            <person name="Ohme M."/>
            <person name="Tanaka M."/>
            <person name="Wakasugi T."/>
            <person name="Hayashida N."/>
            <person name="Matsubayashi T."/>
            <person name="Zaita N."/>
            <person name="Chunwongse J."/>
            <person name="Obokata J."/>
            <person name="Yamaguchi-Shinozaki K."/>
            <person name="Ohto C."/>
            <person name="Torazawa K."/>
            <person name="Meng B.-Y."/>
            <person name="Sugita M."/>
            <person name="Deno H."/>
            <person name="Kamogashira T."/>
            <person name="Yamada K."/>
            <person name="Kusuda J."/>
            <person name="Takaiwa F."/>
            <person name="Kato A."/>
            <person name="Tohdoh N."/>
            <person name="Shimada H."/>
            <person name="Sugiura M."/>
        </authorList>
    </citation>
    <scope>NUCLEOTIDE SEQUENCE [LARGE SCALE GENOMIC DNA]</scope>
    <source>
        <strain>cv. Bright Yellow 4</strain>
    </source>
</reference>
<evidence type="ECO:0000255" key="1">
    <source>
        <dbReference type="HAMAP-Rule" id="MF_01390"/>
    </source>
</evidence>
<feature type="chain" id="PRO_0000143548" description="Maturase K">
    <location>
        <begin position="1"/>
        <end position="509"/>
    </location>
</feature>
<proteinExistence type="inferred from homology"/>
<accession>P12176</accession>
<protein>
    <recommendedName>
        <fullName evidence="1">Maturase K</fullName>
    </recommendedName>
    <alternativeName>
        <fullName evidence="1">Intron maturase</fullName>
    </alternativeName>
</protein>
<gene>
    <name evidence="1" type="primary">matK</name>
    <name type="synonym">ycf14</name>
</gene>
<organism>
    <name type="scientific">Nicotiana tabacum</name>
    <name type="common">Common tobacco</name>
    <dbReference type="NCBI Taxonomy" id="4097"/>
    <lineage>
        <taxon>Eukaryota</taxon>
        <taxon>Viridiplantae</taxon>
        <taxon>Streptophyta</taxon>
        <taxon>Embryophyta</taxon>
        <taxon>Tracheophyta</taxon>
        <taxon>Spermatophyta</taxon>
        <taxon>Magnoliopsida</taxon>
        <taxon>eudicotyledons</taxon>
        <taxon>Gunneridae</taxon>
        <taxon>Pentapetalae</taxon>
        <taxon>asterids</taxon>
        <taxon>lamiids</taxon>
        <taxon>Solanales</taxon>
        <taxon>Solanaceae</taxon>
        <taxon>Nicotianoideae</taxon>
        <taxon>Nicotianeae</taxon>
        <taxon>Nicotiana</taxon>
    </lineage>
</organism>
<comment type="function">
    <text evidence="1">Usually encoded in the trnK tRNA gene intron. Probably assists in splicing its own and other chloroplast group II introns.</text>
</comment>
<comment type="subcellular location">
    <subcellularLocation>
        <location>Plastid</location>
        <location>Chloroplast</location>
    </subcellularLocation>
</comment>
<comment type="similarity">
    <text evidence="1">Belongs to the intron maturase 2 family. MatK subfamily.</text>
</comment>
<geneLocation type="chloroplast"/>